<feature type="chain" id="PRO_1000098408" description="Methionyl-tRNA formyltransferase">
    <location>
        <begin position="1"/>
        <end position="316"/>
    </location>
</feature>
<feature type="binding site" evidence="1">
    <location>
        <begin position="112"/>
        <end position="115"/>
    </location>
    <ligand>
        <name>(6S)-5,6,7,8-tetrahydrofolate</name>
        <dbReference type="ChEBI" id="CHEBI:57453"/>
    </ligand>
</feature>
<reference key="1">
    <citation type="submission" date="2008-05" db="EMBL/GenBank/DDBJ databases">
        <title>Complete sequence of chromosome of Geobacter lovleyi SZ.</title>
        <authorList>
            <consortium name="US DOE Joint Genome Institute"/>
            <person name="Lucas S."/>
            <person name="Copeland A."/>
            <person name="Lapidus A."/>
            <person name="Glavina del Rio T."/>
            <person name="Dalin E."/>
            <person name="Tice H."/>
            <person name="Bruce D."/>
            <person name="Goodwin L."/>
            <person name="Pitluck S."/>
            <person name="Chertkov O."/>
            <person name="Meincke L."/>
            <person name="Brettin T."/>
            <person name="Detter J.C."/>
            <person name="Han C."/>
            <person name="Tapia R."/>
            <person name="Kuske C.R."/>
            <person name="Schmutz J."/>
            <person name="Larimer F."/>
            <person name="Land M."/>
            <person name="Hauser L."/>
            <person name="Kyrpides N."/>
            <person name="Mikhailova N."/>
            <person name="Sung Y."/>
            <person name="Fletcher K.E."/>
            <person name="Ritalahti K.M."/>
            <person name="Loeffler F.E."/>
            <person name="Richardson P."/>
        </authorList>
    </citation>
    <scope>NUCLEOTIDE SEQUENCE [LARGE SCALE GENOMIC DNA]</scope>
    <source>
        <strain>ATCC BAA-1151 / DSM 17278 / SZ</strain>
    </source>
</reference>
<accession>B3EAP0</accession>
<evidence type="ECO:0000255" key="1">
    <source>
        <dbReference type="HAMAP-Rule" id="MF_00182"/>
    </source>
</evidence>
<proteinExistence type="inferred from homology"/>
<keyword id="KW-0648">Protein biosynthesis</keyword>
<keyword id="KW-1185">Reference proteome</keyword>
<keyword id="KW-0808">Transferase</keyword>
<dbReference type="EC" id="2.1.2.9" evidence="1"/>
<dbReference type="EMBL" id="CP001089">
    <property type="protein sequence ID" value="ACD96923.1"/>
    <property type="molecule type" value="Genomic_DNA"/>
</dbReference>
<dbReference type="RefSeq" id="WP_012471247.1">
    <property type="nucleotide sequence ID" value="NC_010814.1"/>
</dbReference>
<dbReference type="SMR" id="B3EAP0"/>
<dbReference type="STRING" id="398767.Glov_3217"/>
<dbReference type="KEGG" id="glo:Glov_3217"/>
<dbReference type="eggNOG" id="COG0223">
    <property type="taxonomic scope" value="Bacteria"/>
</dbReference>
<dbReference type="HOGENOM" id="CLU_033347_1_1_7"/>
<dbReference type="OrthoDB" id="9802815at2"/>
<dbReference type="Proteomes" id="UP000002420">
    <property type="component" value="Chromosome"/>
</dbReference>
<dbReference type="GO" id="GO:0005829">
    <property type="term" value="C:cytosol"/>
    <property type="evidence" value="ECO:0007669"/>
    <property type="project" value="TreeGrafter"/>
</dbReference>
<dbReference type="GO" id="GO:0004479">
    <property type="term" value="F:methionyl-tRNA formyltransferase activity"/>
    <property type="evidence" value="ECO:0007669"/>
    <property type="project" value="UniProtKB-UniRule"/>
</dbReference>
<dbReference type="CDD" id="cd08646">
    <property type="entry name" value="FMT_core_Met-tRNA-FMT_N"/>
    <property type="match status" value="1"/>
</dbReference>
<dbReference type="CDD" id="cd08704">
    <property type="entry name" value="Met_tRNA_FMT_C"/>
    <property type="match status" value="1"/>
</dbReference>
<dbReference type="FunFam" id="3.40.50.12230:FF:000001">
    <property type="entry name" value="Methionyl-tRNA formyltransferase"/>
    <property type="match status" value="1"/>
</dbReference>
<dbReference type="Gene3D" id="3.10.25.10">
    <property type="entry name" value="Formyl transferase, C-terminal domain"/>
    <property type="match status" value="1"/>
</dbReference>
<dbReference type="Gene3D" id="3.40.50.170">
    <property type="entry name" value="Formyl transferase, N-terminal domain"/>
    <property type="match status" value="1"/>
</dbReference>
<dbReference type="HAMAP" id="MF_00182">
    <property type="entry name" value="Formyl_trans"/>
    <property type="match status" value="1"/>
</dbReference>
<dbReference type="InterPro" id="IPR005794">
    <property type="entry name" value="Fmt"/>
</dbReference>
<dbReference type="InterPro" id="IPR005793">
    <property type="entry name" value="Formyl_trans_C"/>
</dbReference>
<dbReference type="InterPro" id="IPR037022">
    <property type="entry name" value="Formyl_trans_C_sf"/>
</dbReference>
<dbReference type="InterPro" id="IPR002376">
    <property type="entry name" value="Formyl_transf_N"/>
</dbReference>
<dbReference type="InterPro" id="IPR036477">
    <property type="entry name" value="Formyl_transf_N_sf"/>
</dbReference>
<dbReference type="InterPro" id="IPR011034">
    <property type="entry name" value="Formyl_transferase-like_C_sf"/>
</dbReference>
<dbReference type="InterPro" id="IPR001555">
    <property type="entry name" value="GART_AS"/>
</dbReference>
<dbReference type="InterPro" id="IPR044135">
    <property type="entry name" value="Met-tRNA-FMT_C"/>
</dbReference>
<dbReference type="InterPro" id="IPR041711">
    <property type="entry name" value="Met-tRNA-FMT_N"/>
</dbReference>
<dbReference type="NCBIfam" id="TIGR00460">
    <property type="entry name" value="fmt"/>
    <property type="match status" value="1"/>
</dbReference>
<dbReference type="PANTHER" id="PTHR11138">
    <property type="entry name" value="METHIONYL-TRNA FORMYLTRANSFERASE"/>
    <property type="match status" value="1"/>
</dbReference>
<dbReference type="PANTHER" id="PTHR11138:SF5">
    <property type="entry name" value="METHIONYL-TRNA FORMYLTRANSFERASE, MITOCHONDRIAL"/>
    <property type="match status" value="1"/>
</dbReference>
<dbReference type="Pfam" id="PF02911">
    <property type="entry name" value="Formyl_trans_C"/>
    <property type="match status" value="1"/>
</dbReference>
<dbReference type="Pfam" id="PF00551">
    <property type="entry name" value="Formyl_trans_N"/>
    <property type="match status" value="1"/>
</dbReference>
<dbReference type="SUPFAM" id="SSF50486">
    <property type="entry name" value="FMT C-terminal domain-like"/>
    <property type="match status" value="1"/>
</dbReference>
<dbReference type="SUPFAM" id="SSF53328">
    <property type="entry name" value="Formyltransferase"/>
    <property type="match status" value="1"/>
</dbReference>
<dbReference type="PROSITE" id="PS00373">
    <property type="entry name" value="GART"/>
    <property type="match status" value="1"/>
</dbReference>
<name>FMT_TRIL1</name>
<organism>
    <name type="scientific">Trichlorobacter lovleyi (strain ATCC BAA-1151 / DSM 17278 / SZ)</name>
    <name type="common">Geobacter lovleyi</name>
    <dbReference type="NCBI Taxonomy" id="398767"/>
    <lineage>
        <taxon>Bacteria</taxon>
        <taxon>Pseudomonadati</taxon>
        <taxon>Thermodesulfobacteriota</taxon>
        <taxon>Desulfuromonadia</taxon>
        <taxon>Geobacterales</taxon>
        <taxon>Geobacteraceae</taxon>
        <taxon>Trichlorobacter</taxon>
    </lineage>
</organism>
<gene>
    <name evidence="1" type="primary">fmt</name>
    <name type="ordered locus">Glov_3217</name>
</gene>
<protein>
    <recommendedName>
        <fullName evidence="1">Methionyl-tRNA formyltransferase</fullName>
        <ecNumber evidence="1">2.1.2.9</ecNumber>
    </recommendedName>
</protein>
<sequence>MTGWRIIFMGTPEFACPTLQTLLDRTENVVAVFTQPDRPKGRGQKLQPPPVKELALRHGIPVHQPPKVRTPEVIEQIRALQPDLIVVIAFGQILPKALLEIPPQGCVNVHASLLPRYRGAAPLNWCIVNGETETGVTTMLMDVGLDTGPMLLKKTTPIAPDEDIQSLHDRMSQLGAELLGETLDGLKTGRIVPEAQDDSQSCYAPLLKKEHGLIDWQKPAVTIHNQIRGLSAWPGAVTSLGGAPLKLYRSSIGQGAGTPGTIIATGKNGIEVACGHGSLIIHELQAAGSKKMDAASFLAGHPLALGTLLMPHEVTA</sequence>
<comment type="function">
    <text evidence="1">Attaches a formyl group to the free amino group of methionyl-tRNA(fMet). The formyl group appears to play a dual role in the initiator identity of N-formylmethionyl-tRNA by promoting its recognition by IF2 and preventing the misappropriation of this tRNA by the elongation apparatus.</text>
</comment>
<comment type="catalytic activity">
    <reaction evidence="1">
        <text>L-methionyl-tRNA(fMet) + (6R)-10-formyltetrahydrofolate = N-formyl-L-methionyl-tRNA(fMet) + (6S)-5,6,7,8-tetrahydrofolate + H(+)</text>
        <dbReference type="Rhea" id="RHEA:24380"/>
        <dbReference type="Rhea" id="RHEA-COMP:9952"/>
        <dbReference type="Rhea" id="RHEA-COMP:9953"/>
        <dbReference type="ChEBI" id="CHEBI:15378"/>
        <dbReference type="ChEBI" id="CHEBI:57453"/>
        <dbReference type="ChEBI" id="CHEBI:78530"/>
        <dbReference type="ChEBI" id="CHEBI:78844"/>
        <dbReference type="ChEBI" id="CHEBI:195366"/>
        <dbReference type="EC" id="2.1.2.9"/>
    </reaction>
</comment>
<comment type="similarity">
    <text evidence="1">Belongs to the Fmt family.</text>
</comment>